<sequence length="66" mass="7820">MPKQKTHRASAKRFKRTGSGGLKRFRAYTSHRFHGKTKKQRRHLRKASMVHSGDFKRIKAMLTRLK</sequence>
<accession>A8AX12</accession>
<organism>
    <name type="scientific">Streptococcus gordonii (strain Challis / ATCC 35105 / BCRC 15272 / CH1 / DL1 / V288)</name>
    <dbReference type="NCBI Taxonomy" id="467705"/>
    <lineage>
        <taxon>Bacteria</taxon>
        <taxon>Bacillati</taxon>
        <taxon>Bacillota</taxon>
        <taxon>Bacilli</taxon>
        <taxon>Lactobacillales</taxon>
        <taxon>Streptococcaceae</taxon>
        <taxon>Streptococcus</taxon>
    </lineage>
</organism>
<name>RL35_STRGC</name>
<proteinExistence type="inferred from homology"/>
<feature type="chain" id="PRO_1000081633" description="Large ribosomal subunit protein bL35">
    <location>
        <begin position="1"/>
        <end position="66"/>
    </location>
</feature>
<feature type="region of interest" description="Disordered" evidence="2">
    <location>
        <begin position="1"/>
        <end position="21"/>
    </location>
</feature>
<feature type="compositionally biased region" description="Basic residues" evidence="2">
    <location>
        <begin position="1"/>
        <end position="16"/>
    </location>
</feature>
<evidence type="ECO:0000255" key="1">
    <source>
        <dbReference type="HAMAP-Rule" id="MF_00514"/>
    </source>
</evidence>
<evidence type="ECO:0000256" key="2">
    <source>
        <dbReference type="SAM" id="MobiDB-lite"/>
    </source>
</evidence>
<evidence type="ECO:0000305" key="3"/>
<reference key="1">
    <citation type="journal article" date="2007" name="J. Bacteriol.">
        <title>Genome-wide transcriptional changes in Streptococcus gordonii in response to competence signaling peptide.</title>
        <authorList>
            <person name="Vickerman M.M."/>
            <person name="Iobst S."/>
            <person name="Jesionowski A.M."/>
            <person name="Gill S.R."/>
        </authorList>
    </citation>
    <scope>NUCLEOTIDE SEQUENCE [LARGE SCALE GENOMIC DNA]</scope>
    <source>
        <strain>Challis / ATCC 35105 / BCRC 15272 / CH1 / DL1 / V288</strain>
    </source>
</reference>
<comment type="similarity">
    <text evidence="1">Belongs to the bacterial ribosomal protein bL35 family.</text>
</comment>
<protein>
    <recommendedName>
        <fullName evidence="1">Large ribosomal subunit protein bL35</fullName>
    </recommendedName>
    <alternativeName>
        <fullName evidence="3">50S ribosomal protein L35</fullName>
    </alternativeName>
</protein>
<gene>
    <name evidence="1" type="primary">rpmI</name>
    <name type="ordered locus">SGO_1033</name>
</gene>
<keyword id="KW-1185">Reference proteome</keyword>
<keyword id="KW-0687">Ribonucleoprotein</keyword>
<keyword id="KW-0689">Ribosomal protein</keyword>
<dbReference type="EMBL" id="CP000725">
    <property type="protein sequence ID" value="ABV09525.1"/>
    <property type="molecule type" value="Genomic_DNA"/>
</dbReference>
<dbReference type="RefSeq" id="WP_001125942.1">
    <property type="nucleotide sequence ID" value="NC_009785.1"/>
</dbReference>
<dbReference type="SMR" id="A8AX12"/>
<dbReference type="STRING" id="467705.SGO_1033"/>
<dbReference type="GeneID" id="93922057"/>
<dbReference type="KEGG" id="sgo:SGO_1033"/>
<dbReference type="eggNOG" id="COG0291">
    <property type="taxonomic scope" value="Bacteria"/>
</dbReference>
<dbReference type="HOGENOM" id="CLU_169643_3_0_9"/>
<dbReference type="Proteomes" id="UP000001131">
    <property type="component" value="Chromosome"/>
</dbReference>
<dbReference type="GO" id="GO:0022625">
    <property type="term" value="C:cytosolic large ribosomal subunit"/>
    <property type="evidence" value="ECO:0007669"/>
    <property type="project" value="TreeGrafter"/>
</dbReference>
<dbReference type="GO" id="GO:0003735">
    <property type="term" value="F:structural constituent of ribosome"/>
    <property type="evidence" value="ECO:0007669"/>
    <property type="project" value="InterPro"/>
</dbReference>
<dbReference type="GO" id="GO:0006412">
    <property type="term" value="P:translation"/>
    <property type="evidence" value="ECO:0007669"/>
    <property type="project" value="UniProtKB-UniRule"/>
</dbReference>
<dbReference type="FunFam" id="4.10.410.60:FF:000001">
    <property type="entry name" value="50S ribosomal protein L35"/>
    <property type="match status" value="1"/>
</dbReference>
<dbReference type="Gene3D" id="4.10.410.60">
    <property type="match status" value="1"/>
</dbReference>
<dbReference type="HAMAP" id="MF_00514">
    <property type="entry name" value="Ribosomal_bL35"/>
    <property type="match status" value="1"/>
</dbReference>
<dbReference type="InterPro" id="IPR001706">
    <property type="entry name" value="Ribosomal_bL35"/>
</dbReference>
<dbReference type="InterPro" id="IPR021137">
    <property type="entry name" value="Ribosomal_bL35-like"/>
</dbReference>
<dbReference type="InterPro" id="IPR018265">
    <property type="entry name" value="Ribosomal_bL35_CS"/>
</dbReference>
<dbReference type="InterPro" id="IPR037229">
    <property type="entry name" value="Ribosomal_bL35_sf"/>
</dbReference>
<dbReference type="NCBIfam" id="TIGR00001">
    <property type="entry name" value="rpmI_bact"/>
    <property type="match status" value="1"/>
</dbReference>
<dbReference type="PANTHER" id="PTHR33343">
    <property type="entry name" value="54S RIBOSOMAL PROTEIN BL35M"/>
    <property type="match status" value="1"/>
</dbReference>
<dbReference type="PANTHER" id="PTHR33343:SF1">
    <property type="entry name" value="LARGE RIBOSOMAL SUBUNIT PROTEIN BL35M"/>
    <property type="match status" value="1"/>
</dbReference>
<dbReference type="Pfam" id="PF01632">
    <property type="entry name" value="Ribosomal_L35p"/>
    <property type="match status" value="1"/>
</dbReference>
<dbReference type="PRINTS" id="PR00064">
    <property type="entry name" value="RIBOSOMALL35"/>
</dbReference>
<dbReference type="SUPFAM" id="SSF143034">
    <property type="entry name" value="L35p-like"/>
    <property type="match status" value="1"/>
</dbReference>
<dbReference type="PROSITE" id="PS00936">
    <property type="entry name" value="RIBOSOMAL_L35"/>
    <property type="match status" value="1"/>
</dbReference>